<evidence type="ECO:0000250" key="1">
    <source>
        <dbReference type="UniProtKB" id="D3WYV9"/>
    </source>
</evidence>
<evidence type="ECO:0000255" key="2"/>
<evidence type="ECO:0000255" key="3">
    <source>
        <dbReference type="PROSITE-ProRule" id="PRU00477"/>
    </source>
</evidence>
<evidence type="ECO:0000256" key="4">
    <source>
        <dbReference type="SAM" id="MobiDB-lite"/>
    </source>
</evidence>
<evidence type="ECO:0000269" key="5">
    <source>
    </source>
</evidence>
<evidence type="ECO:0000269" key="6">
    <source>
    </source>
</evidence>
<evidence type="ECO:0000303" key="7">
    <source>
    </source>
</evidence>
<evidence type="ECO:0000303" key="8">
    <source>
    </source>
</evidence>
<evidence type="ECO:0000305" key="9"/>
<evidence type="ECO:0007744" key="10">
    <source>
        <dbReference type="PDB" id="2YFR"/>
    </source>
</evidence>
<evidence type="ECO:0007744" key="11">
    <source>
        <dbReference type="PDB" id="2YFS"/>
    </source>
</evidence>
<evidence type="ECO:0007744" key="12">
    <source>
        <dbReference type="PDB" id="2YFT"/>
    </source>
</evidence>
<evidence type="ECO:0007829" key="13">
    <source>
        <dbReference type="PDB" id="2YFR"/>
    </source>
</evidence>
<evidence type="ECO:0007829" key="14">
    <source>
        <dbReference type="PDB" id="2YFS"/>
    </source>
</evidence>
<evidence type="ECO:0007829" key="15">
    <source>
        <dbReference type="PDB" id="2YFT"/>
    </source>
</evidence>
<protein>
    <recommendedName>
        <fullName evidence="7">Inulosucrase</fullName>
        <shortName evidence="1">IS</shortName>
        <ecNumber evidence="5 6">2.4.1.9</ecNumber>
    </recommendedName>
</protein>
<proteinExistence type="evidence at protein level"/>
<sequence>MLENKNHKKISLSGKSLLMGTLSTAAIVLSASTANAATINADNVNENQTVEVTASSVNNENNKQVTEKDSADKSTSDVAEDANTKKSNENTETTEKNTQTVVTNAPVSDVKNTNTVTAETPVDKVVNNSDQKTTNAATTDTKKDDVKQVEKKDSVDKTNAEENKDSSVKPAENATKAELKGQVKDIVEESGVDTSKLTNDQINELNKINFSKEAKSGTQLTYNDFKKIAKTLIEQDARYAIPFFNASKIKNMPAAKTLDAQSGKVEDLEIWDSWPVQDAKTGYVSNWNGYQLVIGMMGVPNVNDNHIYLLYNKYGDNDFNHWKNAGPIFGLGTPVIQQWSGSATLNKDGSIQLYYTKVDTSDNNTNHQKLASATVYLNLEKDQDKISIAHVDNDHIVFEGDGYHYQTYDQWKETNKGADNIAMRDAHVIDDDNGNRYLVFEASTGTENYQGDDQIYQWLNYGGTNKDNLGDFFQILSNSDIKDRAKWSNAAIGIIKLNDDVKNPSVAKVYSPLISAPMVSDEIERPDVVKLGNKYYLFAATRLNRGSNDDAWMATNKAVGDNVAMIGYVSDNLTHGYVPLNESGVVLTASVPANWRTATYSYYAVPVEGRDDQLLITSYITNRGEVAGKGMHATWAPSFLLQINPDNTTTVLAKMTNQGDWIWDDSSENPDMMGVLEKDAPNSAALPGEWGKPVDWDLIGGYNLKPHQPVTPIPNVPTTPETPTTPDKPEVPTTPEVPTTPETPTPEAPKNPVKKTSQSKLPKAGDKNSFAAVVLGAVSSILGAVGLTGVSKRKRNN</sequence>
<keyword id="KW-0002">3D-structure</keyword>
<keyword id="KW-0106">Calcium</keyword>
<keyword id="KW-0119">Carbohydrate metabolism</keyword>
<keyword id="KW-0134">Cell wall</keyword>
<keyword id="KW-0328">Glycosyltransferase</keyword>
<keyword id="KW-0479">Metal-binding</keyword>
<keyword id="KW-0572">Peptidoglycan-anchor</keyword>
<keyword id="KW-0964">Secreted</keyword>
<keyword id="KW-0732">Signal</keyword>
<keyword id="KW-0808">Transferase</keyword>
<feature type="signal peptide" evidence="2">
    <location>
        <begin position="1"/>
        <end position="36"/>
    </location>
</feature>
<feature type="chain" id="PRO_0000431248" description="Inulosucrase">
    <location>
        <begin position="37"/>
        <end position="764"/>
    </location>
</feature>
<feature type="propeptide" id="PRO_0000431249" description="Removed by sortase" evidence="3">
    <location>
        <begin position="765"/>
        <end position="797"/>
    </location>
</feature>
<feature type="region of interest" description="Disordered" evidence="4">
    <location>
        <begin position="54"/>
        <end position="176"/>
    </location>
</feature>
<feature type="region of interest" description="Disordered" evidence="4">
    <location>
        <begin position="708"/>
        <end position="766"/>
    </location>
</feature>
<feature type="short sequence motif" description="LPXTG sorting signal" evidence="3">
    <location>
        <begin position="761"/>
        <end position="765"/>
    </location>
</feature>
<feature type="compositionally biased region" description="Polar residues" evidence="4">
    <location>
        <begin position="54"/>
        <end position="64"/>
    </location>
</feature>
<feature type="compositionally biased region" description="Basic and acidic residues" evidence="4">
    <location>
        <begin position="65"/>
        <end position="75"/>
    </location>
</feature>
<feature type="compositionally biased region" description="Basic and acidic residues" evidence="4">
    <location>
        <begin position="82"/>
        <end position="95"/>
    </location>
</feature>
<feature type="compositionally biased region" description="Low complexity" evidence="4">
    <location>
        <begin position="130"/>
        <end position="139"/>
    </location>
</feature>
<feature type="compositionally biased region" description="Basic and acidic residues" evidence="4">
    <location>
        <begin position="140"/>
        <end position="167"/>
    </location>
</feature>
<feature type="compositionally biased region" description="Low complexity" evidence="4">
    <location>
        <begin position="718"/>
        <end position="740"/>
    </location>
</feature>
<feature type="active site" description="Nucleophile" evidence="8">
    <location>
        <position position="272"/>
    </location>
</feature>
<feature type="active site" description="Proton donor/acceptor" evidence="8">
    <location>
        <position position="524"/>
    </location>
</feature>
<feature type="binding site" evidence="6">
    <location>
        <position position="271"/>
    </location>
    <ligand>
        <name>substrate</name>
    </ligand>
</feature>
<feature type="binding site" evidence="6 11">
    <location>
        <position position="317"/>
    </location>
    <ligand>
        <name>Ca(2+)</name>
        <dbReference type="ChEBI" id="CHEBI:29108"/>
        <label>1</label>
    </ligand>
</feature>
<feature type="binding site" evidence="6">
    <location>
        <position position="340"/>
    </location>
    <ligand>
        <name>substrate</name>
    </ligand>
</feature>
<feature type="binding site" evidence="6 10 11 12">
    <location>
        <position position="419"/>
    </location>
    <ligand>
        <name>Ca(2+)</name>
        <dbReference type="ChEBI" id="CHEBI:29108"/>
        <label>2</label>
    </ligand>
</feature>
<feature type="binding site" evidence="6">
    <location>
        <begin position="424"/>
        <end position="425"/>
    </location>
    <ligand>
        <name>substrate</name>
    </ligand>
</feature>
<feature type="binding site" evidence="6 10 11 12">
    <location>
        <position position="450"/>
    </location>
    <ligand>
        <name>Ca(2+)</name>
        <dbReference type="ChEBI" id="CHEBI:29108"/>
        <label>2</label>
    </ligand>
</feature>
<feature type="binding site" evidence="6 10 11 12">
    <location>
        <position position="487"/>
    </location>
    <ligand>
        <name>Ca(2+)</name>
        <dbReference type="ChEBI" id="CHEBI:29108"/>
        <label>2</label>
    </ligand>
</feature>
<feature type="binding site" evidence="6 10 11 12">
    <location>
        <position position="489"/>
    </location>
    <ligand>
        <name>Ca(2+)</name>
        <dbReference type="ChEBI" id="CHEBI:29108"/>
        <label>2</label>
    </ligand>
</feature>
<feature type="binding site" evidence="6 10 11 12">
    <location>
        <position position="521"/>
    </location>
    <ligand>
        <name>Ca(2+)</name>
        <dbReference type="ChEBI" id="CHEBI:29108"/>
        <label>2</label>
    </ligand>
</feature>
<feature type="binding site" evidence="6">
    <location>
        <begin position="522"/>
        <end position="524"/>
    </location>
    <ligand>
        <name>substrate</name>
    </ligand>
</feature>
<feature type="binding site" evidence="6">
    <location>
        <position position="542"/>
    </location>
    <ligand>
        <name>substrate</name>
    </ligand>
</feature>
<feature type="binding site" evidence="6 11">
    <location>
        <position position="660"/>
    </location>
    <ligand>
        <name>Ca(2+)</name>
        <dbReference type="ChEBI" id="CHEBI:29108"/>
        <label>1</label>
    </ligand>
</feature>
<feature type="binding site" evidence="6 11">
    <location>
        <position position="662"/>
    </location>
    <ligand>
        <name>Ca(2+)</name>
        <dbReference type="ChEBI" id="CHEBI:29108"/>
        <label>1</label>
    </ligand>
</feature>
<feature type="binding site" evidence="6 11">
    <location>
        <position position="667"/>
    </location>
    <ligand>
        <name>Ca(2+)</name>
        <dbReference type="ChEBI" id="CHEBI:29108"/>
        <label>1</label>
    </ligand>
</feature>
<feature type="site" description="Transition state stabilizer" evidence="8">
    <location>
        <position position="425"/>
    </location>
</feature>
<feature type="modified residue" description="Pentaglycyl murein peptidoglycan amidated alanine" evidence="3">
    <location>
        <position position="764"/>
    </location>
</feature>
<feature type="mutagenesis site" description="Loss of catalytic activity." evidence="6">
    <original>D</original>
    <variation>N</variation>
    <location>
        <position position="272"/>
    </location>
</feature>
<feature type="mutagenesis site" description="1.5% of wild-type activity." evidence="6">
    <location>
        <begin position="301"/>
        <end position="303"/>
    </location>
</feature>
<feature type="mutagenesis site" description="25% of wild-type activity." evidence="6">
    <original>N</original>
    <variation>A</variation>
    <location>
        <position position="301"/>
    </location>
</feature>
<feature type="mutagenesis site" description="40% of wild-type activity." evidence="6">
    <original>N</original>
    <variation>S</variation>
    <location>
        <position position="301"/>
    </location>
</feature>
<feature type="mutagenesis site" description="29% of wild-type activity." evidence="6">
    <original>N</original>
    <variation>A</variation>
    <location>
        <position position="305"/>
    </location>
</feature>
<feature type="mutagenesis site" description="50% of wild-type activity." evidence="6">
    <original>N</original>
    <variation>S</variation>
    <location>
        <position position="305"/>
    </location>
</feature>
<feature type="helix" evidence="13">
    <location>
        <begin position="181"/>
        <end position="189"/>
    </location>
</feature>
<feature type="helix" evidence="13">
    <location>
        <begin position="194"/>
        <end position="196"/>
    </location>
</feature>
<feature type="helix" evidence="13">
    <location>
        <begin position="199"/>
        <end position="205"/>
    </location>
</feature>
<feature type="strand" evidence="13">
    <location>
        <begin position="215"/>
        <end position="219"/>
    </location>
</feature>
<feature type="helix" evidence="13">
    <location>
        <begin position="222"/>
        <end position="234"/>
    </location>
</feature>
<feature type="turn" evidence="13">
    <location>
        <begin position="237"/>
        <end position="239"/>
    </location>
</feature>
<feature type="helix" evidence="13">
    <location>
        <begin position="246"/>
        <end position="248"/>
    </location>
</feature>
<feature type="helix" evidence="13">
    <location>
        <begin position="253"/>
        <end position="255"/>
    </location>
</feature>
<feature type="strand" evidence="13">
    <location>
        <begin position="256"/>
        <end position="258"/>
    </location>
</feature>
<feature type="turn" evidence="13">
    <location>
        <begin position="260"/>
        <end position="262"/>
    </location>
</feature>
<feature type="strand" evidence="13">
    <location>
        <begin position="263"/>
        <end position="267"/>
    </location>
</feature>
<feature type="strand" evidence="13">
    <location>
        <begin position="269"/>
        <end position="277"/>
    </location>
</feature>
<feature type="turn" evidence="13">
    <location>
        <begin position="279"/>
        <end position="281"/>
    </location>
</feature>
<feature type="strand" evidence="13">
    <location>
        <begin position="290"/>
        <end position="298"/>
    </location>
</feature>
<feature type="strand" evidence="13">
    <location>
        <begin position="306"/>
        <end position="313"/>
    </location>
</feature>
<feature type="helix" evidence="13">
    <location>
        <begin position="319"/>
        <end position="321"/>
    </location>
</feature>
<feature type="strand" evidence="13">
    <location>
        <begin position="323"/>
        <end position="327"/>
    </location>
</feature>
<feature type="strand" evidence="13">
    <location>
        <begin position="336"/>
        <end position="345"/>
    </location>
</feature>
<feature type="strand" evidence="13">
    <location>
        <begin position="351"/>
        <end position="359"/>
    </location>
</feature>
<feature type="turn" evidence="13">
    <location>
        <begin position="361"/>
        <end position="364"/>
    </location>
</feature>
<feature type="strand" evidence="13">
    <location>
        <begin position="367"/>
        <end position="380"/>
    </location>
</feature>
<feature type="helix" evidence="13">
    <location>
        <begin position="381"/>
        <end position="383"/>
    </location>
</feature>
<feature type="strand" evidence="13">
    <location>
        <begin position="385"/>
        <end position="398"/>
    </location>
</feature>
<feature type="strand" evidence="13">
    <location>
        <begin position="402"/>
        <end position="405"/>
    </location>
</feature>
<feature type="helix" evidence="13">
    <location>
        <begin position="408"/>
        <end position="414"/>
    </location>
</feature>
<feature type="strand" evidence="13">
    <location>
        <begin position="424"/>
        <end position="430"/>
    </location>
</feature>
<feature type="strand" evidence="13">
    <location>
        <begin position="436"/>
        <end position="444"/>
    </location>
</feature>
<feature type="helix" evidence="13">
    <location>
        <begin position="452"/>
        <end position="456"/>
    </location>
</feature>
<feature type="helix" evidence="13">
    <location>
        <begin position="458"/>
        <end position="460"/>
    </location>
</feature>
<feature type="helix" evidence="13">
    <location>
        <begin position="465"/>
        <end position="477"/>
    </location>
</feature>
<feature type="helix" evidence="13">
    <location>
        <begin position="479"/>
        <end position="487"/>
    </location>
</feature>
<feature type="strand" evidence="13">
    <location>
        <begin position="490"/>
        <end position="497"/>
    </location>
</feature>
<feature type="strand" evidence="15">
    <location>
        <begin position="501"/>
        <end position="503"/>
    </location>
</feature>
<feature type="strand" evidence="13">
    <location>
        <begin position="506"/>
        <end position="509"/>
    </location>
</feature>
<feature type="strand" evidence="13">
    <location>
        <begin position="513"/>
        <end position="515"/>
    </location>
</feature>
<feature type="turn" evidence="13">
    <location>
        <begin position="517"/>
        <end position="519"/>
    </location>
</feature>
<feature type="strand" evidence="13">
    <location>
        <begin position="524"/>
        <end position="531"/>
    </location>
</feature>
<feature type="strand" evidence="13">
    <location>
        <begin position="534"/>
        <end position="542"/>
    </location>
</feature>
<feature type="helix" evidence="13">
    <location>
        <begin position="543"/>
        <end position="545"/>
    </location>
</feature>
<feature type="helix" evidence="13">
    <location>
        <begin position="549"/>
        <end position="559"/>
    </location>
</feature>
<feature type="strand" evidence="13">
    <location>
        <begin position="563"/>
        <end position="575"/>
    </location>
</feature>
<feature type="turn" evidence="13">
    <location>
        <begin position="580"/>
        <end position="583"/>
    </location>
</feature>
<feature type="strand" evidence="13">
    <location>
        <begin position="584"/>
        <end position="588"/>
    </location>
</feature>
<feature type="strand" evidence="13">
    <location>
        <begin position="599"/>
        <end position="607"/>
    </location>
</feature>
<feature type="strand" evidence="13">
    <location>
        <begin position="610"/>
        <end position="621"/>
    </location>
</feature>
<feature type="turn" evidence="13">
    <location>
        <begin position="624"/>
        <end position="627"/>
    </location>
</feature>
<feature type="strand" evidence="13">
    <location>
        <begin position="637"/>
        <end position="644"/>
    </location>
</feature>
<feature type="turn" evidence="13">
    <location>
        <begin position="645"/>
        <end position="647"/>
    </location>
</feature>
<feature type="strand" evidence="13">
    <location>
        <begin position="648"/>
        <end position="658"/>
    </location>
</feature>
<feature type="helix" evidence="14">
    <location>
        <begin position="665"/>
        <end position="667"/>
    </location>
</feature>
<feature type="helix" evidence="13">
    <location>
        <begin position="670"/>
        <end position="672"/>
    </location>
</feature>
<feature type="strand" evidence="14">
    <location>
        <begin position="678"/>
        <end position="680"/>
    </location>
</feature>
<feature type="strand" evidence="13">
    <location>
        <begin position="683"/>
        <end position="685"/>
    </location>
</feature>
<feature type="turn" evidence="13">
    <location>
        <begin position="687"/>
        <end position="691"/>
    </location>
</feature>
<feature type="turn" evidence="13">
    <location>
        <begin position="695"/>
        <end position="697"/>
    </location>
</feature>
<feature type="turn" evidence="13">
    <location>
        <begin position="700"/>
        <end position="703"/>
    </location>
</feature>
<dbReference type="EC" id="2.4.1.9" evidence="5 6"/>
<dbReference type="EMBL" id="AE017198">
    <property type="protein sequence ID" value="AAS08734.1"/>
    <property type="molecule type" value="Genomic_DNA"/>
</dbReference>
<dbReference type="RefSeq" id="WP_011161805.1">
    <property type="nucleotide sequence ID" value="NC_005362.1"/>
</dbReference>
<dbReference type="PDB" id="2YFR">
    <property type="method" value="X-ray"/>
    <property type="resolution" value="1.75 A"/>
    <property type="chains" value="A=145-708"/>
</dbReference>
<dbReference type="PDB" id="2YFS">
    <property type="method" value="X-ray"/>
    <property type="resolution" value="2.60 A"/>
    <property type="chains" value="A=145-708"/>
</dbReference>
<dbReference type="PDB" id="2YFT">
    <property type="method" value="X-ray"/>
    <property type="resolution" value="1.85 A"/>
    <property type="chains" value="A=145-708"/>
</dbReference>
<dbReference type="PDBsum" id="2YFR"/>
<dbReference type="PDBsum" id="2YFS"/>
<dbReference type="PDBsum" id="2YFT"/>
<dbReference type="SMR" id="Q74K42"/>
<dbReference type="CAZy" id="GH68">
    <property type="family name" value="Glycoside Hydrolase Family 68"/>
</dbReference>
<dbReference type="KEGG" id="ljo:LJ_0913"/>
<dbReference type="eggNOG" id="COG1621">
    <property type="taxonomic scope" value="Bacteria"/>
</dbReference>
<dbReference type="HOGENOM" id="CLU_013854_0_0_9"/>
<dbReference type="BRENDA" id="2.4.1.9">
    <property type="organism ID" value="2873"/>
</dbReference>
<dbReference type="SABIO-RK" id="Q74K42"/>
<dbReference type="EvolutionaryTrace" id="Q74K42"/>
<dbReference type="Proteomes" id="UP000000581">
    <property type="component" value="Chromosome"/>
</dbReference>
<dbReference type="GO" id="GO:0005576">
    <property type="term" value="C:extracellular region"/>
    <property type="evidence" value="ECO:0007669"/>
    <property type="project" value="UniProtKB-KW"/>
</dbReference>
<dbReference type="GO" id="GO:0047725">
    <property type="term" value="F:inulosucrase activity"/>
    <property type="evidence" value="ECO:0007669"/>
    <property type="project" value="UniProtKB-EC"/>
</dbReference>
<dbReference type="GO" id="GO:0050053">
    <property type="term" value="F:levansucrase activity"/>
    <property type="evidence" value="ECO:0007669"/>
    <property type="project" value="InterPro"/>
</dbReference>
<dbReference type="GO" id="GO:0046872">
    <property type="term" value="F:metal ion binding"/>
    <property type="evidence" value="ECO:0007669"/>
    <property type="project" value="UniProtKB-KW"/>
</dbReference>
<dbReference type="GO" id="GO:0009758">
    <property type="term" value="P:carbohydrate utilization"/>
    <property type="evidence" value="ECO:0007669"/>
    <property type="project" value="InterPro"/>
</dbReference>
<dbReference type="CDD" id="cd08997">
    <property type="entry name" value="GH68"/>
    <property type="match status" value="1"/>
</dbReference>
<dbReference type="Gene3D" id="2.115.10.20">
    <property type="entry name" value="Glycosyl hydrolase domain, family 43"/>
    <property type="match status" value="1"/>
</dbReference>
<dbReference type="InterPro" id="IPR003469">
    <property type="entry name" value="Glyco_hydro_68"/>
</dbReference>
<dbReference type="InterPro" id="IPR023296">
    <property type="entry name" value="Glyco_hydro_beta-prop_sf"/>
</dbReference>
<dbReference type="InterPro" id="IPR019931">
    <property type="entry name" value="LPXTG_anchor"/>
</dbReference>
<dbReference type="NCBIfam" id="TIGR01167">
    <property type="entry name" value="LPXTG_anchor"/>
    <property type="match status" value="1"/>
</dbReference>
<dbReference type="Pfam" id="PF02435">
    <property type="entry name" value="Glyco_hydro_68"/>
    <property type="match status" value="1"/>
</dbReference>
<dbReference type="Pfam" id="PF00746">
    <property type="entry name" value="Gram_pos_anchor"/>
    <property type="match status" value="1"/>
</dbReference>
<dbReference type="SUPFAM" id="SSF75005">
    <property type="entry name" value="Arabinanase/levansucrase/invertase"/>
    <property type="match status" value="1"/>
</dbReference>
<dbReference type="PROSITE" id="PS50847">
    <property type="entry name" value="GRAM_POS_ANCHORING"/>
    <property type="match status" value="1"/>
</dbReference>
<comment type="function">
    <text evidence="5 6">Fructosyltransferase that catalyzes the polymerization of the fructose moiety of sucrose to produce inulin polymer and inulin oligosaccharides such as 1-kestose and nystose.</text>
</comment>
<comment type="catalytic activity">
    <reaction evidence="5 6">
        <text>[(2-&gt;1)-beta-D-fructosyl](n) + sucrose = [(2-&gt;1)-beta-D-fructosyl](n+1) + D-glucose</text>
        <dbReference type="Rhea" id="RHEA:15745"/>
        <dbReference type="Rhea" id="RHEA-COMP:10036"/>
        <dbReference type="Rhea" id="RHEA-COMP:14296"/>
        <dbReference type="ChEBI" id="CHEBI:4167"/>
        <dbReference type="ChEBI" id="CHEBI:17992"/>
        <dbReference type="ChEBI" id="CHEBI:29084"/>
        <dbReference type="EC" id="2.4.1.9"/>
    </reaction>
</comment>
<comment type="cofactor">
    <cofactor evidence="5">
        <name>Ca(2+)</name>
        <dbReference type="ChEBI" id="CHEBI:29108"/>
    </cofactor>
</comment>
<comment type="biophysicochemical properties">
    <phDependence>
        <text evidence="5">Optimum pH is 7. More than 85% of the activity is retained in the pH range 4.5-6.0. Activity decreases sharply at pH 7.5.</text>
    </phDependence>
    <temperatureDependence>
        <text evidence="5">Optimum temperature is 55 degrees Celsius. Activity drastically decreases at 60 degrees Celsius.</text>
    </temperatureDependence>
</comment>
<comment type="subcellular location">
    <subcellularLocation>
        <location evidence="3">Secreted</location>
        <location evidence="3">Cell wall</location>
        <topology evidence="3">Peptidoglycan-anchor</topology>
    </subcellularLocation>
</comment>
<comment type="similarity">
    <text evidence="9">Belongs to the glycosyl hydrolase 68 family.</text>
</comment>
<name>INUS_LACJO</name>
<reference key="1">
    <citation type="journal article" date="2004" name="Proc. Natl. Acad. Sci. U.S.A.">
        <title>The genome sequence of the probiotic intestinal bacterium Lactobacillus johnsonii NCC 533.</title>
        <authorList>
            <person name="Pridmore R.D."/>
            <person name="Berger B."/>
            <person name="Desiere F."/>
            <person name="Vilanova D."/>
            <person name="Barretto C."/>
            <person name="Pittet A.-C."/>
            <person name="Zwahlen M.-C."/>
            <person name="Rouvet M."/>
            <person name="Altermann E."/>
            <person name="Barrangou R."/>
            <person name="Mollet B."/>
            <person name="Mercenier A."/>
            <person name="Klaenhammer T."/>
            <person name="Arigoni F."/>
            <person name="Schell M.A."/>
        </authorList>
    </citation>
    <scope>NUCLEOTIDE SEQUENCE [LARGE SCALE GENOMIC DNA]</scope>
    <source>
        <strain>CNCM I-1225 / La1 / NCC 533</strain>
    </source>
</reference>
<reference key="2">
    <citation type="journal article" date="2008" name="Appl. Environ. Microbiol.">
        <title>The probiotic Lactobacillus johnsonii NCC 533 produces high-molecular-mass inulin from sucrose by using an inulosucrase enzyme.</title>
        <authorList>
            <person name="Anwar M.A."/>
            <person name="Kralj S."/>
            <person name="van der Maarel M.J."/>
            <person name="Dijkhuizen L."/>
        </authorList>
    </citation>
    <scope>FUNCTION</scope>
    <scope>CATALYTIC ACTIVITY</scope>
    <scope>COFACTOR</scope>
    <scope>BIOPHYSICOCHEMICAL PROPERTIES</scope>
    <source>
        <strain>CNCM I-1225 / La1 / NCC 533</strain>
    </source>
</reference>
<reference key="3">
    <citation type="journal article" date="2011" name="J. Mol. Biol.">
        <title>Crystal structure of inulosucrase from Lactobacillus: insights into the substrate specificity and product specificity of GH68 fructansucrases.</title>
        <authorList>
            <person name="Pijning T."/>
            <person name="Anwar M.A."/>
            <person name="Boger M."/>
            <person name="Dobruchowska J.M."/>
            <person name="Leemhuis H."/>
            <person name="Kralj S."/>
            <person name="Dijkhuizen L."/>
            <person name="Dijkstra B.W."/>
        </authorList>
    </citation>
    <scope>X-RAY CRYSTALLOGRAPHY (1.75 ANGSTROMS) OF 145-708 OF APOENZYME AND COMPLEX WITH THE TRANSFRUCTOSYLATION PRODUCT 1-KESTOSE AND CALCIUM AND MUTANT ASN-272 IN COMPLEX WITH SUCROSE</scope>
    <scope>FUNCTION</scope>
    <scope>CATALYTIC ACTIVITY</scope>
    <scope>ACTIVE SITE</scope>
    <scope>MUTAGENESIS OF ASP-272; ASN-301 AND ASN-305</scope>
    <source>
        <strain>CNCM I-1225 / La1 / NCC 533</strain>
    </source>
</reference>
<organism>
    <name type="scientific">Lactobacillus johnsonii (strain CNCM I-12250 / La1 / NCC 533)</name>
    <dbReference type="NCBI Taxonomy" id="257314"/>
    <lineage>
        <taxon>Bacteria</taxon>
        <taxon>Bacillati</taxon>
        <taxon>Bacillota</taxon>
        <taxon>Bacilli</taxon>
        <taxon>Lactobacillales</taxon>
        <taxon>Lactobacillaceae</taxon>
        <taxon>Lactobacillus</taxon>
    </lineage>
</organism>
<gene>
    <name evidence="7" type="primary">inuJ</name>
    <name evidence="7" type="synonym">ftf</name>
    <name type="ordered locus">LJ_0913</name>
</gene>
<accession>Q74K42</accession>